<accession>B7MCQ6</accession>
<feature type="chain" id="PRO_1000191368" description="Large-conductance mechanosensitive channel">
    <location>
        <begin position="1"/>
        <end position="137"/>
    </location>
</feature>
<feature type="transmembrane region" description="Helical" evidence="1">
    <location>
        <begin position="10"/>
        <end position="30"/>
    </location>
</feature>
<feature type="transmembrane region" description="Helical" evidence="1">
    <location>
        <begin position="76"/>
        <end position="96"/>
    </location>
</feature>
<proteinExistence type="inferred from homology"/>
<sequence length="137" mass="15072">MSIIKEFREFAMRGNVVDLAVGVIIGAAFGKIVSSLVADIIMPPLGLLIGGIDFKQFAVTLREAQGDIPAVVMHYGVFIQNVFDFLIVAFAIFMAIKLINKLNRKKEEPAAATPAPTKEEVLLTEIRDLLKEQNNRS</sequence>
<dbReference type="EMBL" id="CU928161">
    <property type="protein sequence ID" value="CAR04895.1"/>
    <property type="molecule type" value="Genomic_DNA"/>
</dbReference>
<dbReference type="RefSeq" id="WP_000022450.1">
    <property type="nucleotide sequence ID" value="NC_011742.1"/>
</dbReference>
<dbReference type="SMR" id="B7MCQ6"/>
<dbReference type="KEGG" id="ecz:ECS88_3678"/>
<dbReference type="HOGENOM" id="CLU_095787_0_0_6"/>
<dbReference type="Proteomes" id="UP000000747">
    <property type="component" value="Chromosome"/>
</dbReference>
<dbReference type="GO" id="GO:0005886">
    <property type="term" value="C:plasma membrane"/>
    <property type="evidence" value="ECO:0007669"/>
    <property type="project" value="UniProtKB-SubCell"/>
</dbReference>
<dbReference type="GO" id="GO:0008381">
    <property type="term" value="F:mechanosensitive monoatomic ion channel activity"/>
    <property type="evidence" value="ECO:0007669"/>
    <property type="project" value="UniProtKB-UniRule"/>
</dbReference>
<dbReference type="FunFam" id="1.10.1200.120:FF:000001">
    <property type="entry name" value="Large-conductance mechanosensitive channel"/>
    <property type="match status" value="1"/>
</dbReference>
<dbReference type="Gene3D" id="1.10.1200.120">
    <property type="entry name" value="Large-conductance mechanosensitive channel, MscL, domain 1"/>
    <property type="match status" value="1"/>
</dbReference>
<dbReference type="HAMAP" id="MF_00115">
    <property type="entry name" value="MscL"/>
    <property type="match status" value="1"/>
</dbReference>
<dbReference type="InterPro" id="IPR019823">
    <property type="entry name" value="Mechanosensitive_channel_CS"/>
</dbReference>
<dbReference type="InterPro" id="IPR001185">
    <property type="entry name" value="MS_channel"/>
</dbReference>
<dbReference type="InterPro" id="IPR037673">
    <property type="entry name" value="MSC/AndL"/>
</dbReference>
<dbReference type="InterPro" id="IPR036019">
    <property type="entry name" value="MscL_channel"/>
</dbReference>
<dbReference type="NCBIfam" id="TIGR00220">
    <property type="entry name" value="mscL"/>
    <property type="match status" value="1"/>
</dbReference>
<dbReference type="NCBIfam" id="NF001841">
    <property type="entry name" value="PRK00567.1-1"/>
    <property type="match status" value="1"/>
</dbReference>
<dbReference type="NCBIfam" id="NF001843">
    <property type="entry name" value="PRK00567.1-4"/>
    <property type="match status" value="1"/>
</dbReference>
<dbReference type="PANTHER" id="PTHR30266:SF2">
    <property type="entry name" value="LARGE-CONDUCTANCE MECHANOSENSITIVE CHANNEL"/>
    <property type="match status" value="1"/>
</dbReference>
<dbReference type="PANTHER" id="PTHR30266">
    <property type="entry name" value="MECHANOSENSITIVE CHANNEL MSCL"/>
    <property type="match status" value="1"/>
</dbReference>
<dbReference type="Pfam" id="PF01741">
    <property type="entry name" value="MscL"/>
    <property type="match status" value="1"/>
</dbReference>
<dbReference type="PRINTS" id="PR01264">
    <property type="entry name" value="MECHCHANNEL"/>
</dbReference>
<dbReference type="SUPFAM" id="SSF81330">
    <property type="entry name" value="Gated mechanosensitive channel"/>
    <property type="match status" value="1"/>
</dbReference>
<dbReference type="PROSITE" id="PS01327">
    <property type="entry name" value="MSCL"/>
    <property type="match status" value="1"/>
</dbReference>
<gene>
    <name evidence="1" type="primary">mscL</name>
    <name type="ordered locus">ECS88_3678</name>
</gene>
<comment type="function">
    <text evidence="1">Channel that opens in response to stretch forces in the membrane lipid bilayer. May participate in the regulation of osmotic pressure changes within the cell.</text>
</comment>
<comment type="subunit">
    <text evidence="1">Homopentamer.</text>
</comment>
<comment type="subcellular location">
    <subcellularLocation>
        <location evidence="1">Cell inner membrane</location>
        <topology evidence="1">Multi-pass membrane protein</topology>
    </subcellularLocation>
</comment>
<comment type="similarity">
    <text evidence="1">Belongs to the MscL family.</text>
</comment>
<keyword id="KW-0997">Cell inner membrane</keyword>
<keyword id="KW-1003">Cell membrane</keyword>
<keyword id="KW-0407">Ion channel</keyword>
<keyword id="KW-0406">Ion transport</keyword>
<keyword id="KW-0472">Membrane</keyword>
<keyword id="KW-1185">Reference proteome</keyword>
<keyword id="KW-0812">Transmembrane</keyword>
<keyword id="KW-1133">Transmembrane helix</keyword>
<keyword id="KW-0813">Transport</keyword>
<name>MSCL_ECO45</name>
<reference key="1">
    <citation type="journal article" date="2009" name="PLoS Genet.">
        <title>Organised genome dynamics in the Escherichia coli species results in highly diverse adaptive paths.</title>
        <authorList>
            <person name="Touchon M."/>
            <person name="Hoede C."/>
            <person name="Tenaillon O."/>
            <person name="Barbe V."/>
            <person name="Baeriswyl S."/>
            <person name="Bidet P."/>
            <person name="Bingen E."/>
            <person name="Bonacorsi S."/>
            <person name="Bouchier C."/>
            <person name="Bouvet O."/>
            <person name="Calteau A."/>
            <person name="Chiapello H."/>
            <person name="Clermont O."/>
            <person name="Cruveiller S."/>
            <person name="Danchin A."/>
            <person name="Diard M."/>
            <person name="Dossat C."/>
            <person name="Karoui M.E."/>
            <person name="Frapy E."/>
            <person name="Garry L."/>
            <person name="Ghigo J.M."/>
            <person name="Gilles A.M."/>
            <person name="Johnson J."/>
            <person name="Le Bouguenec C."/>
            <person name="Lescat M."/>
            <person name="Mangenot S."/>
            <person name="Martinez-Jehanne V."/>
            <person name="Matic I."/>
            <person name="Nassif X."/>
            <person name="Oztas S."/>
            <person name="Petit M.A."/>
            <person name="Pichon C."/>
            <person name="Rouy Z."/>
            <person name="Ruf C.S."/>
            <person name="Schneider D."/>
            <person name="Tourret J."/>
            <person name="Vacherie B."/>
            <person name="Vallenet D."/>
            <person name="Medigue C."/>
            <person name="Rocha E.P.C."/>
            <person name="Denamur E."/>
        </authorList>
    </citation>
    <scope>NUCLEOTIDE SEQUENCE [LARGE SCALE GENOMIC DNA]</scope>
    <source>
        <strain>S88 / ExPEC</strain>
    </source>
</reference>
<protein>
    <recommendedName>
        <fullName evidence="1">Large-conductance mechanosensitive channel</fullName>
    </recommendedName>
</protein>
<organism>
    <name type="scientific">Escherichia coli O45:K1 (strain S88 / ExPEC)</name>
    <dbReference type="NCBI Taxonomy" id="585035"/>
    <lineage>
        <taxon>Bacteria</taxon>
        <taxon>Pseudomonadati</taxon>
        <taxon>Pseudomonadota</taxon>
        <taxon>Gammaproteobacteria</taxon>
        <taxon>Enterobacterales</taxon>
        <taxon>Enterobacteriaceae</taxon>
        <taxon>Escherichia</taxon>
    </lineage>
</organism>
<evidence type="ECO:0000255" key="1">
    <source>
        <dbReference type="HAMAP-Rule" id="MF_00115"/>
    </source>
</evidence>